<dbReference type="EC" id="7.1.1.-" evidence="1"/>
<dbReference type="EMBL" id="CP000393">
    <property type="protein sequence ID" value="ABG52590.1"/>
    <property type="molecule type" value="Genomic_DNA"/>
</dbReference>
<dbReference type="RefSeq" id="WP_011612932.1">
    <property type="nucleotide sequence ID" value="NC_008312.1"/>
</dbReference>
<dbReference type="SMR" id="Q10YT4"/>
<dbReference type="STRING" id="203124.Tery_3500"/>
<dbReference type="KEGG" id="ter:Tery_3500"/>
<dbReference type="eggNOG" id="COG0377">
    <property type="taxonomic scope" value="Bacteria"/>
</dbReference>
<dbReference type="HOGENOM" id="CLU_055737_2_1_3"/>
<dbReference type="OrthoDB" id="9786737at2"/>
<dbReference type="GO" id="GO:0031676">
    <property type="term" value="C:plasma membrane-derived thylakoid membrane"/>
    <property type="evidence" value="ECO:0007669"/>
    <property type="project" value="UniProtKB-SubCell"/>
</dbReference>
<dbReference type="GO" id="GO:0045271">
    <property type="term" value="C:respiratory chain complex I"/>
    <property type="evidence" value="ECO:0007669"/>
    <property type="project" value="TreeGrafter"/>
</dbReference>
<dbReference type="GO" id="GO:0051539">
    <property type="term" value="F:4 iron, 4 sulfur cluster binding"/>
    <property type="evidence" value="ECO:0007669"/>
    <property type="project" value="UniProtKB-KW"/>
</dbReference>
<dbReference type="GO" id="GO:0005506">
    <property type="term" value="F:iron ion binding"/>
    <property type="evidence" value="ECO:0007669"/>
    <property type="project" value="UniProtKB-UniRule"/>
</dbReference>
<dbReference type="GO" id="GO:0008137">
    <property type="term" value="F:NADH dehydrogenase (ubiquinone) activity"/>
    <property type="evidence" value="ECO:0007669"/>
    <property type="project" value="InterPro"/>
</dbReference>
<dbReference type="GO" id="GO:0048038">
    <property type="term" value="F:quinone binding"/>
    <property type="evidence" value="ECO:0007669"/>
    <property type="project" value="UniProtKB-KW"/>
</dbReference>
<dbReference type="GO" id="GO:0009060">
    <property type="term" value="P:aerobic respiration"/>
    <property type="evidence" value="ECO:0007669"/>
    <property type="project" value="TreeGrafter"/>
</dbReference>
<dbReference type="GO" id="GO:0015990">
    <property type="term" value="P:electron transport coupled proton transport"/>
    <property type="evidence" value="ECO:0007669"/>
    <property type="project" value="TreeGrafter"/>
</dbReference>
<dbReference type="GO" id="GO:0019684">
    <property type="term" value="P:photosynthesis, light reaction"/>
    <property type="evidence" value="ECO:0007669"/>
    <property type="project" value="UniProtKB-UniRule"/>
</dbReference>
<dbReference type="FunFam" id="3.40.50.12280:FF:000003">
    <property type="entry name" value="NAD(P)H-quinone oxidoreductase subunit K, chloroplastic"/>
    <property type="match status" value="1"/>
</dbReference>
<dbReference type="Gene3D" id="3.40.50.12280">
    <property type="match status" value="1"/>
</dbReference>
<dbReference type="HAMAP" id="MF_01356">
    <property type="entry name" value="NDH1_NuoB"/>
    <property type="match status" value="1"/>
</dbReference>
<dbReference type="InterPro" id="IPR006137">
    <property type="entry name" value="NADH_UbQ_OxRdtase-like_20kDa"/>
</dbReference>
<dbReference type="InterPro" id="IPR006138">
    <property type="entry name" value="NADH_UQ_OxRdtase_20Kd_su"/>
</dbReference>
<dbReference type="NCBIfam" id="TIGR01957">
    <property type="entry name" value="nuoB_fam"/>
    <property type="match status" value="1"/>
</dbReference>
<dbReference type="NCBIfam" id="NF005012">
    <property type="entry name" value="PRK06411.1"/>
    <property type="match status" value="1"/>
</dbReference>
<dbReference type="PANTHER" id="PTHR11995">
    <property type="entry name" value="NADH DEHYDROGENASE"/>
    <property type="match status" value="1"/>
</dbReference>
<dbReference type="PANTHER" id="PTHR11995:SF14">
    <property type="entry name" value="NADH DEHYDROGENASE [UBIQUINONE] IRON-SULFUR PROTEIN 7, MITOCHONDRIAL"/>
    <property type="match status" value="1"/>
</dbReference>
<dbReference type="Pfam" id="PF01058">
    <property type="entry name" value="Oxidored_q6"/>
    <property type="match status" value="1"/>
</dbReference>
<dbReference type="SUPFAM" id="SSF56770">
    <property type="entry name" value="HydA/Nqo6-like"/>
    <property type="match status" value="1"/>
</dbReference>
<dbReference type="PROSITE" id="PS01150">
    <property type="entry name" value="COMPLEX1_20K"/>
    <property type="match status" value="1"/>
</dbReference>
<accession>Q10YT4</accession>
<keyword id="KW-0004">4Fe-4S</keyword>
<keyword id="KW-0408">Iron</keyword>
<keyword id="KW-0411">Iron-sulfur</keyword>
<keyword id="KW-0472">Membrane</keyword>
<keyword id="KW-0479">Metal-binding</keyword>
<keyword id="KW-0520">NAD</keyword>
<keyword id="KW-0521">NADP</keyword>
<keyword id="KW-0618">Plastoquinone</keyword>
<keyword id="KW-0874">Quinone</keyword>
<keyword id="KW-0793">Thylakoid</keyword>
<keyword id="KW-1278">Translocase</keyword>
<keyword id="KW-0813">Transport</keyword>
<name>NDHK_TRIEI</name>
<sequence>MVLSPNQNQKIINPIEESPTVTQELSENIVLTTVDDLYNWAKLSSLWPLLYGTACCFIEFAALIGSRFDFDRFGLVPRSSPRQADLLITAGTITMKYTPTLVRLYEQMPEPKYVIAMGACTITGGMFSMDSPTAVRGVDKLIPVDVYIPGCPPRPEAIIDAVIKLRKKIANDSLQERGQLQQTHRYYCVKHNMKVVEPILTGQYLQTSDRKAVPKELAEAIGMPVSPALQAIPKEEVSLG</sequence>
<feature type="chain" id="PRO_0000358503" description="NAD(P)H-quinone oxidoreductase subunit K">
    <location>
        <begin position="1"/>
        <end position="240"/>
    </location>
</feature>
<feature type="binding site" evidence="1">
    <location>
        <position position="55"/>
    </location>
    <ligand>
        <name>[4Fe-4S] cluster</name>
        <dbReference type="ChEBI" id="CHEBI:49883"/>
    </ligand>
</feature>
<feature type="binding site" evidence="1">
    <location>
        <position position="56"/>
    </location>
    <ligand>
        <name>[4Fe-4S] cluster</name>
        <dbReference type="ChEBI" id="CHEBI:49883"/>
    </ligand>
</feature>
<feature type="binding site" evidence="1">
    <location>
        <position position="120"/>
    </location>
    <ligand>
        <name>[4Fe-4S] cluster</name>
        <dbReference type="ChEBI" id="CHEBI:49883"/>
    </ligand>
</feature>
<feature type="binding site" evidence="1">
    <location>
        <position position="151"/>
    </location>
    <ligand>
        <name>[4Fe-4S] cluster</name>
        <dbReference type="ChEBI" id="CHEBI:49883"/>
    </ligand>
</feature>
<gene>
    <name evidence="1" type="primary">ndhK</name>
    <name type="ordered locus">Tery_3500</name>
</gene>
<reference key="1">
    <citation type="journal article" date="2015" name="Proc. Natl. Acad. Sci. U.S.A.">
        <title>Trichodesmium genome maintains abundant, widespread noncoding DNA in situ, despite oligotrophic lifestyle.</title>
        <authorList>
            <person name="Walworth N."/>
            <person name="Pfreundt U."/>
            <person name="Nelson W.C."/>
            <person name="Mincer T."/>
            <person name="Heidelberg J.F."/>
            <person name="Fu F."/>
            <person name="Waterbury J.B."/>
            <person name="Glavina del Rio T."/>
            <person name="Goodwin L."/>
            <person name="Kyrpides N.C."/>
            <person name="Land M.L."/>
            <person name="Woyke T."/>
            <person name="Hutchins D.A."/>
            <person name="Hess W.R."/>
            <person name="Webb E.A."/>
        </authorList>
    </citation>
    <scope>NUCLEOTIDE SEQUENCE [LARGE SCALE GENOMIC DNA]</scope>
    <source>
        <strain>IMS101</strain>
    </source>
</reference>
<evidence type="ECO:0000255" key="1">
    <source>
        <dbReference type="HAMAP-Rule" id="MF_01356"/>
    </source>
</evidence>
<proteinExistence type="inferred from homology"/>
<comment type="function">
    <text evidence="1">NDH-1 shuttles electrons from an unknown electron donor, via FMN and iron-sulfur (Fe-S) centers, to quinones in the respiratory and/or the photosynthetic chain. The immediate electron acceptor for the enzyme in this species is believed to be plastoquinone. Couples the redox reaction to proton translocation, and thus conserves the redox energy in a proton gradient. Cyanobacterial NDH-1 also plays a role in inorganic carbon-concentration.</text>
</comment>
<comment type="catalytic activity">
    <reaction evidence="1">
        <text>a plastoquinone + NADH + (n+1) H(+)(in) = a plastoquinol + NAD(+) + n H(+)(out)</text>
        <dbReference type="Rhea" id="RHEA:42608"/>
        <dbReference type="Rhea" id="RHEA-COMP:9561"/>
        <dbReference type="Rhea" id="RHEA-COMP:9562"/>
        <dbReference type="ChEBI" id="CHEBI:15378"/>
        <dbReference type="ChEBI" id="CHEBI:17757"/>
        <dbReference type="ChEBI" id="CHEBI:57540"/>
        <dbReference type="ChEBI" id="CHEBI:57945"/>
        <dbReference type="ChEBI" id="CHEBI:62192"/>
    </reaction>
</comment>
<comment type="catalytic activity">
    <reaction evidence="1">
        <text>a plastoquinone + NADPH + (n+1) H(+)(in) = a plastoquinol + NADP(+) + n H(+)(out)</text>
        <dbReference type="Rhea" id="RHEA:42612"/>
        <dbReference type="Rhea" id="RHEA-COMP:9561"/>
        <dbReference type="Rhea" id="RHEA-COMP:9562"/>
        <dbReference type="ChEBI" id="CHEBI:15378"/>
        <dbReference type="ChEBI" id="CHEBI:17757"/>
        <dbReference type="ChEBI" id="CHEBI:57783"/>
        <dbReference type="ChEBI" id="CHEBI:58349"/>
        <dbReference type="ChEBI" id="CHEBI:62192"/>
    </reaction>
</comment>
<comment type="cofactor">
    <cofactor evidence="1">
        <name>[4Fe-4S] cluster</name>
        <dbReference type="ChEBI" id="CHEBI:49883"/>
    </cofactor>
    <text evidence="1">Binds 1 [4Fe-4S] cluster.</text>
</comment>
<comment type="subunit">
    <text evidence="1">NDH-1 can be composed of about 15 different subunits; different subcomplexes with different compositions have been identified which probably have different functions.</text>
</comment>
<comment type="subcellular location">
    <subcellularLocation>
        <location evidence="1">Cellular thylakoid membrane</location>
        <topology evidence="1">Peripheral membrane protein</topology>
        <orientation evidence="1">Cytoplasmic side</orientation>
    </subcellularLocation>
</comment>
<comment type="similarity">
    <text evidence="1">Belongs to the complex I 20 kDa subunit family.</text>
</comment>
<organism>
    <name type="scientific">Trichodesmium erythraeum (strain IMS101)</name>
    <dbReference type="NCBI Taxonomy" id="203124"/>
    <lineage>
        <taxon>Bacteria</taxon>
        <taxon>Bacillati</taxon>
        <taxon>Cyanobacteriota</taxon>
        <taxon>Cyanophyceae</taxon>
        <taxon>Oscillatoriophycideae</taxon>
        <taxon>Oscillatoriales</taxon>
        <taxon>Microcoleaceae</taxon>
        <taxon>Trichodesmium</taxon>
    </lineage>
</organism>
<protein>
    <recommendedName>
        <fullName evidence="1">NAD(P)H-quinone oxidoreductase subunit K</fullName>
        <ecNumber evidence="1">7.1.1.-</ecNumber>
    </recommendedName>
    <alternativeName>
        <fullName evidence="1">NAD(P)H dehydrogenase I subunit K</fullName>
    </alternativeName>
    <alternativeName>
        <fullName evidence="1">NDH-1 subunit K</fullName>
        <shortName evidence="1">NDH-K</shortName>
    </alternativeName>
</protein>